<sequence>MNQPLQHITVLLDEAVDALLDGAAQPVAGQWVDATFGRGGHSRRILQRLGPDGALLAFDKDPDAIEEAARITDARFSIRHEGFRHLSELPAGSVQGVLMDLGVSSPQIDNPERGFSFRFEGPLDMRMDTTRGQSVADWLAEADAQQIAEVIRDYGEERFAGPIAKAIVARRESQGPLRNTAELAELVAGAVRTREAGQNPATRTFQALRIFINAELEELEQALEASLRVLAPGGRLVVISFHSLEDRIVKQFIAKHSKEVYDRRAPFAVPTPMRLEALGRIKPSEAEVAANARSRSAVMRVARRTGVPA</sequence>
<name>RSMH_DELAS</name>
<dbReference type="EC" id="2.1.1.199" evidence="1"/>
<dbReference type="EMBL" id="CP000884">
    <property type="protein sequence ID" value="ABX34106.1"/>
    <property type="molecule type" value="Genomic_DNA"/>
</dbReference>
<dbReference type="RefSeq" id="WP_012203392.1">
    <property type="nucleotide sequence ID" value="NC_010002.1"/>
</dbReference>
<dbReference type="SMR" id="A9BUJ8"/>
<dbReference type="STRING" id="398578.Daci_1462"/>
<dbReference type="GeneID" id="24115685"/>
<dbReference type="KEGG" id="dac:Daci_1462"/>
<dbReference type="eggNOG" id="COG0275">
    <property type="taxonomic scope" value="Bacteria"/>
</dbReference>
<dbReference type="HOGENOM" id="CLU_038422_2_0_4"/>
<dbReference type="Proteomes" id="UP000000784">
    <property type="component" value="Chromosome"/>
</dbReference>
<dbReference type="GO" id="GO:0005737">
    <property type="term" value="C:cytoplasm"/>
    <property type="evidence" value="ECO:0007669"/>
    <property type="project" value="UniProtKB-SubCell"/>
</dbReference>
<dbReference type="GO" id="GO:0071424">
    <property type="term" value="F:rRNA (cytosine-N4-)-methyltransferase activity"/>
    <property type="evidence" value="ECO:0007669"/>
    <property type="project" value="UniProtKB-UniRule"/>
</dbReference>
<dbReference type="GO" id="GO:0070475">
    <property type="term" value="P:rRNA base methylation"/>
    <property type="evidence" value="ECO:0007669"/>
    <property type="project" value="UniProtKB-UniRule"/>
</dbReference>
<dbReference type="Gene3D" id="1.10.150.170">
    <property type="entry name" value="Putative methyltransferase TM0872, insert domain"/>
    <property type="match status" value="1"/>
</dbReference>
<dbReference type="Gene3D" id="3.40.50.150">
    <property type="entry name" value="Vaccinia Virus protein VP39"/>
    <property type="match status" value="1"/>
</dbReference>
<dbReference type="HAMAP" id="MF_01007">
    <property type="entry name" value="16SrRNA_methyltr_H"/>
    <property type="match status" value="1"/>
</dbReference>
<dbReference type="InterPro" id="IPR002903">
    <property type="entry name" value="RsmH"/>
</dbReference>
<dbReference type="InterPro" id="IPR023397">
    <property type="entry name" value="SAM-dep_MeTrfase_MraW_recog"/>
</dbReference>
<dbReference type="InterPro" id="IPR029063">
    <property type="entry name" value="SAM-dependent_MTases_sf"/>
</dbReference>
<dbReference type="NCBIfam" id="TIGR00006">
    <property type="entry name" value="16S rRNA (cytosine(1402)-N(4))-methyltransferase RsmH"/>
    <property type="match status" value="1"/>
</dbReference>
<dbReference type="PANTHER" id="PTHR11265:SF0">
    <property type="entry name" value="12S RRNA N4-METHYLCYTIDINE METHYLTRANSFERASE"/>
    <property type="match status" value="1"/>
</dbReference>
<dbReference type="PANTHER" id="PTHR11265">
    <property type="entry name" value="S-ADENOSYL-METHYLTRANSFERASE MRAW"/>
    <property type="match status" value="1"/>
</dbReference>
<dbReference type="Pfam" id="PF01795">
    <property type="entry name" value="Methyltransf_5"/>
    <property type="match status" value="1"/>
</dbReference>
<dbReference type="PIRSF" id="PIRSF004486">
    <property type="entry name" value="MraW"/>
    <property type="match status" value="1"/>
</dbReference>
<dbReference type="SUPFAM" id="SSF81799">
    <property type="entry name" value="Putative methyltransferase TM0872, insert domain"/>
    <property type="match status" value="1"/>
</dbReference>
<dbReference type="SUPFAM" id="SSF53335">
    <property type="entry name" value="S-adenosyl-L-methionine-dependent methyltransferases"/>
    <property type="match status" value="1"/>
</dbReference>
<protein>
    <recommendedName>
        <fullName evidence="1">Ribosomal RNA small subunit methyltransferase H</fullName>
        <ecNumber evidence="1">2.1.1.199</ecNumber>
    </recommendedName>
    <alternativeName>
        <fullName evidence="1">16S rRNA m(4)C1402 methyltransferase</fullName>
    </alternativeName>
    <alternativeName>
        <fullName evidence="1">rRNA (cytosine-N(4)-)-methyltransferase RsmH</fullName>
    </alternativeName>
</protein>
<proteinExistence type="inferred from homology"/>
<accession>A9BUJ8</accession>
<evidence type="ECO:0000255" key="1">
    <source>
        <dbReference type="HAMAP-Rule" id="MF_01007"/>
    </source>
</evidence>
<comment type="function">
    <text evidence="1">Specifically methylates the N4 position of cytidine in position 1402 (C1402) of 16S rRNA.</text>
</comment>
<comment type="catalytic activity">
    <reaction evidence="1">
        <text>cytidine(1402) in 16S rRNA + S-adenosyl-L-methionine = N(4)-methylcytidine(1402) in 16S rRNA + S-adenosyl-L-homocysteine + H(+)</text>
        <dbReference type="Rhea" id="RHEA:42928"/>
        <dbReference type="Rhea" id="RHEA-COMP:10286"/>
        <dbReference type="Rhea" id="RHEA-COMP:10287"/>
        <dbReference type="ChEBI" id="CHEBI:15378"/>
        <dbReference type="ChEBI" id="CHEBI:57856"/>
        <dbReference type="ChEBI" id="CHEBI:59789"/>
        <dbReference type="ChEBI" id="CHEBI:74506"/>
        <dbReference type="ChEBI" id="CHEBI:82748"/>
        <dbReference type="EC" id="2.1.1.199"/>
    </reaction>
</comment>
<comment type="subcellular location">
    <subcellularLocation>
        <location evidence="1">Cytoplasm</location>
    </subcellularLocation>
</comment>
<comment type="similarity">
    <text evidence="1">Belongs to the methyltransferase superfamily. RsmH family.</text>
</comment>
<keyword id="KW-0963">Cytoplasm</keyword>
<keyword id="KW-0489">Methyltransferase</keyword>
<keyword id="KW-1185">Reference proteome</keyword>
<keyword id="KW-0698">rRNA processing</keyword>
<keyword id="KW-0949">S-adenosyl-L-methionine</keyword>
<keyword id="KW-0808">Transferase</keyword>
<organism>
    <name type="scientific">Delftia acidovorans (strain DSM 14801 / SPH-1)</name>
    <dbReference type="NCBI Taxonomy" id="398578"/>
    <lineage>
        <taxon>Bacteria</taxon>
        <taxon>Pseudomonadati</taxon>
        <taxon>Pseudomonadota</taxon>
        <taxon>Betaproteobacteria</taxon>
        <taxon>Burkholderiales</taxon>
        <taxon>Comamonadaceae</taxon>
        <taxon>Delftia</taxon>
    </lineage>
</organism>
<reference key="1">
    <citation type="submission" date="2007-11" db="EMBL/GenBank/DDBJ databases">
        <title>Complete sequence of Delftia acidovorans DSM 14801 / SPH-1.</title>
        <authorList>
            <person name="Copeland A."/>
            <person name="Lucas S."/>
            <person name="Lapidus A."/>
            <person name="Barry K."/>
            <person name="Glavina del Rio T."/>
            <person name="Dalin E."/>
            <person name="Tice H."/>
            <person name="Pitluck S."/>
            <person name="Lowry S."/>
            <person name="Clum A."/>
            <person name="Schmutz J."/>
            <person name="Larimer F."/>
            <person name="Land M."/>
            <person name="Hauser L."/>
            <person name="Kyrpides N."/>
            <person name="Kim E."/>
            <person name="Schleheck D."/>
            <person name="Richardson P."/>
        </authorList>
    </citation>
    <scope>NUCLEOTIDE SEQUENCE [LARGE SCALE GENOMIC DNA]</scope>
    <source>
        <strain>DSM 14801 / SPH-1</strain>
    </source>
</reference>
<gene>
    <name evidence="1" type="primary">rsmH</name>
    <name type="synonym">mraW</name>
    <name type="ordered locus">Daci_1462</name>
</gene>
<feature type="chain" id="PRO_0000386843" description="Ribosomal RNA small subunit methyltransferase H">
    <location>
        <begin position="1"/>
        <end position="309"/>
    </location>
</feature>
<feature type="binding site" evidence="1">
    <location>
        <begin position="39"/>
        <end position="41"/>
    </location>
    <ligand>
        <name>S-adenosyl-L-methionine</name>
        <dbReference type="ChEBI" id="CHEBI:59789"/>
    </ligand>
</feature>
<feature type="binding site" evidence="1">
    <location>
        <position position="59"/>
    </location>
    <ligand>
        <name>S-adenosyl-L-methionine</name>
        <dbReference type="ChEBI" id="CHEBI:59789"/>
    </ligand>
</feature>
<feature type="binding site" evidence="1">
    <location>
        <position position="83"/>
    </location>
    <ligand>
        <name>S-adenosyl-L-methionine</name>
        <dbReference type="ChEBI" id="CHEBI:59789"/>
    </ligand>
</feature>
<feature type="binding site" evidence="1">
    <location>
        <position position="100"/>
    </location>
    <ligand>
        <name>S-adenosyl-L-methionine</name>
        <dbReference type="ChEBI" id="CHEBI:59789"/>
    </ligand>
</feature>
<feature type="binding site" evidence="1">
    <location>
        <position position="107"/>
    </location>
    <ligand>
        <name>S-adenosyl-L-methionine</name>
        <dbReference type="ChEBI" id="CHEBI:59789"/>
    </ligand>
</feature>